<dbReference type="EC" id="3.2.1.129" evidence="3 5"/>
<dbReference type="EMBL" id="X78310">
    <property type="protein sequence ID" value="CAA55120.1"/>
    <property type="molecule type" value="Genomic_DNA"/>
</dbReference>
<dbReference type="EMBL" id="Z36986">
    <property type="protein sequence ID" value="CAA85449.2"/>
    <property type="molecule type" value="Genomic_DNA"/>
</dbReference>
<dbReference type="EMBL" id="AM084415">
    <property type="protein sequence ID" value="CAJ29458.1"/>
    <property type="molecule type" value="Genomic_DNA"/>
</dbReference>
<dbReference type="SMR" id="P49714"/>
<dbReference type="CAZy" id="GH58">
    <property type="family name" value="Glycoside Hydrolase Family 58"/>
</dbReference>
<dbReference type="KEGG" id="vg:3837325"/>
<dbReference type="OrthoDB" id="303at10239"/>
<dbReference type="BioCyc" id="MetaCyc:MONOMER-20295"/>
<dbReference type="Proteomes" id="UP000001154">
    <property type="component" value="Segment"/>
</dbReference>
<dbReference type="GO" id="GO:0098024">
    <property type="term" value="C:virus tail, fiber"/>
    <property type="evidence" value="ECO:0007669"/>
    <property type="project" value="UniProtKB-KW"/>
</dbReference>
<dbReference type="GO" id="GO:0016996">
    <property type="term" value="F:endo-alpha-(2,8)-sialidase activity"/>
    <property type="evidence" value="ECO:0007669"/>
    <property type="project" value="UniProtKB-EC"/>
</dbReference>
<dbReference type="GO" id="GO:0098671">
    <property type="term" value="P:adhesion receptor-mediated virion attachment to host cell"/>
    <property type="evidence" value="ECO:0007669"/>
    <property type="project" value="UniProtKB-KW"/>
</dbReference>
<dbReference type="GO" id="GO:0098994">
    <property type="term" value="P:symbiont entry into host cell via disruption of host cell envelope"/>
    <property type="evidence" value="ECO:0007669"/>
    <property type="project" value="UniProtKB-KW"/>
</dbReference>
<dbReference type="GO" id="GO:0098996">
    <property type="term" value="P:symbiont entry into host cell via disruption of host cell glycocalyx"/>
    <property type="evidence" value="ECO:0007669"/>
    <property type="project" value="UniProtKB-KW"/>
</dbReference>
<dbReference type="CDD" id="cd10144">
    <property type="entry name" value="Peptidase_S74_CIMCD"/>
    <property type="match status" value="1"/>
</dbReference>
<dbReference type="Gene3D" id="2.120.10.10">
    <property type="match status" value="1"/>
</dbReference>
<dbReference type="Gene3D" id="2.40.30.20">
    <property type="match status" value="1"/>
</dbReference>
<dbReference type="Gene3D" id="4.10.1090.10">
    <property type="entry name" value="Endosialidase, domain 4"/>
    <property type="match status" value="1"/>
</dbReference>
<dbReference type="Gene3D" id="3.30.750.60">
    <property type="entry name" value="Endosialidase, N-terminal extension domain"/>
    <property type="match status" value="1"/>
</dbReference>
<dbReference type="Gene3D" id="1.10.10.10">
    <property type="entry name" value="Winged helix-like DNA-binding domain superfamily/Winged helix DNA-binding domain"/>
    <property type="match status" value="1"/>
</dbReference>
<dbReference type="InterPro" id="IPR023366">
    <property type="entry name" value="ATP_synth_asu-like_sf"/>
</dbReference>
<dbReference type="InterPro" id="IPR024427">
    <property type="entry name" value="Endosialidase_beta_barrel"/>
</dbReference>
<dbReference type="InterPro" id="IPR024428">
    <property type="entry name" value="Endosialidase_beta_prop"/>
</dbReference>
<dbReference type="InterPro" id="IPR024430">
    <property type="entry name" value="Endosialidase_C_dom"/>
</dbReference>
<dbReference type="InterPro" id="IPR044914">
    <property type="entry name" value="Endosialidase_C_dom_sf"/>
</dbReference>
<dbReference type="InterPro" id="IPR024429">
    <property type="entry name" value="Endosialidase_N-extension"/>
</dbReference>
<dbReference type="InterPro" id="IPR001724">
    <property type="entry name" value="Glycl_Hydrolase_58"/>
</dbReference>
<dbReference type="InterPro" id="IPR030392">
    <property type="entry name" value="S74_ICA"/>
</dbReference>
<dbReference type="InterPro" id="IPR036278">
    <property type="entry name" value="Sialidase_sf"/>
</dbReference>
<dbReference type="InterPro" id="IPR036388">
    <property type="entry name" value="WH-like_DNA-bd_sf"/>
</dbReference>
<dbReference type="Pfam" id="PF12195">
    <property type="entry name" value="End_beta_barrel"/>
    <property type="match status" value="1"/>
</dbReference>
<dbReference type="Pfam" id="PF12217">
    <property type="entry name" value="End_beta_propel"/>
    <property type="match status" value="1"/>
</dbReference>
<dbReference type="Pfam" id="PF12218">
    <property type="entry name" value="End_N_terminal"/>
    <property type="match status" value="1"/>
</dbReference>
<dbReference type="Pfam" id="PF12219">
    <property type="entry name" value="End_tail_spike"/>
    <property type="match status" value="1"/>
</dbReference>
<dbReference type="Pfam" id="PF13884">
    <property type="entry name" value="Peptidase_S74"/>
    <property type="match status" value="1"/>
</dbReference>
<dbReference type="PRINTS" id="PR00849">
    <property type="entry name" value="GLHYDRLASE58"/>
</dbReference>
<dbReference type="SUPFAM" id="SSF69349">
    <property type="entry name" value="Phage fibre proteins"/>
    <property type="match status" value="1"/>
</dbReference>
<dbReference type="SUPFAM" id="SSF50939">
    <property type="entry name" value="Sialidases"/>
    <property type="match status" value="1"/>
</dbReference>
<dbReference type="PROSITE" id="PS51688">
    <property type="entry name" value="ICA"/>
    <property type="match status" value="1"/>
</dbReference>
<name>FIBER_BPK1E</name>
<feature type="chain" id="PRO_0000057708" description="Tail spike protein">
    <location>
        <begin position="1"/>
        <end position="811"/>
    </location>
</feature>
<feature type="chain" id="PRO_0000458687" description="Mature tail spike protein">
    <location>
        <begin position="1"/>
        <end position="706"/>
    </location>
</feature>
<feature type="chain" id="PRO_0000438181" description="Intramolecular chaperone" evidence="1">
    <location>
        <begin position="707"/>
        <end position="811"/>
    </location>
</feature>
<feature type="repeat" description="BNR 1">
    <location>
        <begin position="150"/>
        <end position="161"/>
    </location>
</feature>
<feature type="repeat" description="BNR 2">
    <location>
        <begin position="286"/>
        <end position="293"/>
    </location>
</feature>
<feature type="repeat" description="BNR 3">
    <location>
        <begin position="398"/>
        <end position="409"/>
    </location>
</feature>
<feature type="domain" description="Peptidase S74" evidence="2">
    <location>
        <begin position="706"/>
        <end position="808"/>
    </location>
</feature>
<feature type="active site" evidence="1">
    <location>
        <position position="371"/>
    </location>
</feature>
<feature type="active site" evidence="1">
    <location>
        <position position="386"/>
    </location>
</feature>
<feature type="active site" evidence="1">
    <location>
        <position position="437"/>
    </location>
</feature>
<feature type="site" description="Binding to sialic acid" evidence="1">
    <location>
        <position position="332"/>
    </location>
</feature>
<feature type="site" description="Binding to sialic acid" evidence="1">
    <location>
        <position position="335"/>
    </location>
</feature>
<feature type="site" description="Binding to sialic acid" evidence="1">
    <location>
        <position position="339"/>
    </location>
</feature>
<feature type="site" description="Binding to sialic acid" evidence="1">
    <location>
        <position position="368"/>
    </location>
</feature>
<feature type="site" description="Binding to sialic acid" evidence="1">
    <location>
        <position position="388"/>
    </location>
</feature>
<feature type="site" description="Binding to sialic acid" evidence="1">
    <location>
        <position position="389"/>
    </location>
</feature>
<feature type="site" description="Cleavage; by autolysis" evidence="3">
    <location>
        <begin position="706"/>
        <end position="707"/>
    </location>
</feature>
<feature type="mutagenesis site" description="Greatly reduced enzyme activity." evidence="3">
    <original>D</original>
    <variation>A</variation>
    <location>
        <position position="138"/>
    </location>
</feature>
<feature type="mutagenesis site" description="Complete loss of enzymatic activity." evidence="3">
    <original>SD</original>
    <variation>AA</variation>
    <location>
        <begin position="706"/>
        <end position="707"/>
    </location>
</feature>
<feature type="sequence conflict" description="In Ref. 4; CAJ29458." evidence="8" ref="4">
    <original>G</original>
    <variation>R</variation>
    <location>
        <position position="640"/>
    </location>
</feature>
<feature type="sequence conflict" description="In Ref. 4; CAJ29458." evidence="8" ref="4">
    <original>N</original>
    <variation>K</variation>
    <location>
        <position position="658"/>
    </location>
</feature>
<organism>
    <name type="scientific">Escherichia phage K1E</name>
    <name type="common">Bacteriophage K1E</name>
    <dbReference type="NCBI Taxonomy" id="344022"/>
    <lineage>
        <taxon>Viruses</taxon>
        <taxon>Duplodnaviria</taxon>
        <taxon>Heunggongvirae</taxon>
        <taxon>Uroviricota</taxon>
        <taxon>Caudoviricetes</taxon>
        <taxon>Autographiviridae</taxon>
        <taxon>Molineuxvirinae</taxon>
        <taxon>Vectrevirus</taxon>
    </lineage>
</organism>
<comment type="function">
    <molecule>Mature tail spike protein</molecule>
    <text evidence="1 4 5">Receptor binding protein, which mediates the attachment to the host capsule (PubMed:17585937, PubMed:7626018). Degrades the alpha-2,8-linked polysialic acid K1-type capsule by cleaving within the polymer chain of polysialic acid (By similarity).</text>
</comment>
<comment type="function">
    <molecule>Intramolecular chaperone</molecule>
    <text evidence="3">The C-terminal chaperone protein mediates homotrimerization and proper folding of the catalytic endosialidase trimer.</text>
</comment>
<comment type="catalytic activity">
    <molecule>Mature tail spike protein</molecule>
    <reaction evidence="3 5">
        <text>Endohydrolysis of (2-&gt;8)-alpha-sialosyl linkages in oligo- or poly(sialic) acids.</text>
        <dbReference type="EC" id="3.2.1.129"/>
    </reaction>
</comment>
<comment type="biophysicochemical properties">
    <molecule>Mature tail spike protein</molecule>
    <kinetics>
        <KM evidence="3">17.7 uM for polysialic acid</KM>
    </kinetics>
</comment>
<comment type="subunit">
    <molecule>Mature tail spike protein</molecule>
    <text evidence="1 4">Homotrimer (PubMed:17585937). Interacts with sialic acid (By similarity). Interacts with adapter protein gp37 (PubMed:17585937). Interacts with gp46 (PubMed:17585937).</text>
</comment>
<comment type="subcellular location">
    <molecule>Mature tail spike protein</molecule>
    <subcellularLocation>
        <location evidence="4">Virion</location>
    </subcellularLocation>
    <text evidence="4">Tail spike.</text>
</comment>
<comment type="PTM">
    <molecule>Tail spike protein</molecule>
    <text>The N-terminus is blocked.</text>
</comment>
<comment type="PTM">
    <molecule>Tail spike protein</molecule>
    <text evidence="1 3">Proteolytic cleavage and release of the chaperone in the host cytosol stabilizes the folded protein (PubMed:11994155). The cleavage gives rise to the mature tail spike protein but is not essential for catalytic activity (PubMed:11994155). However, release of the chaperone domain confers kinetic stability and processivity to the endosialidase (By similarity).</text>
</comment>
<comment type="similarity">
    <text evidence="8">Belongs to the glycosyl hydrolase 58 family.</text>
</comment>
<keyword id="KW-1238">Degradation of host capsule during virus entry</keyword>
<keyword id="KW-1235">Degradation of host cell envelope components during virus entry</keyword>
<keyword id="KW-0903">Direct protein sequencing</keyword>
<keyword id="KW-0326">Glycosidase</keyword>
<keyword id="KW-0945">Host-virus interaction</keyword>
<keyword id="KW-0378">Hydrolase</keyword>
<keyword id="KW-1185">Reference proteome</keyword>
<keyword id="KW-0677">Repeat</keyword>
<keyword id="KW-1233">Viral attachment to host adhesion receptor</keyword>
<keyword id="KW-1161">Viral attachment to host cell</keyword>
<keyword id="KW-1230">Viral tail fiber protein</keyword>
<keyword id="KW-1227">Viral tail protein</keyword>
<keyword id="KW-0946">Virion</keyword>
<keyword id="KW-1160">Virus entry into host cell</keyword>
<accession>P49714</accession>
<accession>Q2WC58</accession>
<gene>
    <name type="primary">GP90</name>
    <name type="synonym">END</name>
</gene>
<reference key="1">
    <citation type="journal article" date="1995" name="Biochem. J.">
        <title>Complete nucleotide sequence of the gene encoding bacteriophage E endosialidase: implications for K1E endosialidase structure and function.</title>
        <authorList>
            <person name="Long G.S."/>
            <person name="Bryant J.M."/>
            <person name="Taylor P.W."/>
            <person name="Luzio J.P."/>
        </authorList>
    </citation>
    <scope>NUCLEOTIDE SEQUENCE [GENOMIC DNA]</scope>
    <scope>PROTEIN SEQUENCE OF 1-6; 330-349 AND 613-632</scope>
    <scope>FUNCTION</scope>
    <scope>CATALYTIC ACTIVITY</scope>
</reference>
<reference key="2">
    <citation type="submission" date="1994-09" db="EMBL/GenBank/DDBJ databases">
        <authorList>
            <person name="Gerardy-Schahn R."/>
            <person name="Hansen A."/>
            <person name="Brennecke T."/>
            <person name="Muehlenhoff M."/>
            <person name="Eckhardt M."/>
            <person name="Ziesing S."/>
            <person name="Lottspeich F."/>
            <person name="Frosch M."/>
        </authorList>
    </citation>
    <scope>NUCLEOTIDE SEQUENCE [GENOMIC DNA]</scope>
</reference>
<reference key="3">
    <citation type="submission" date="2005-09" db="EMBL/GenBank/DDBJ databases">
        <authorList>
            <person name="Muehlenhoff M."/>
        </authorList>
    </citation>
    <scope>SEQUENCE REVISION TO 53-56; 523 AND 539</scope>
</reference>
<reference key="4">
    <citation type="journal article" date="2006" name="Mol. Microbiol.">
        <title>Evolution of bacteriophages infecting encapsulated bacteria: lessons from Escherichia coli K1-specific phages.</title>
        <authorList>
            <person name="Stummeyer K."/>
            <person name="Schwarzer D."/>
            <person name="Claus H."/>
            <person name="Vogel U."/>
            <person name="Gerardy-Schahn R."/>
            <person name="Muhlenhoff M."/>
        </authorList>
    </citation>
    <scope>NUCLEOTIDE SEQUENCE [GENOMIC DNA]</scope>
</reference>
<reference key="5">
    <citation type="journal article" date="2002" name="Mol. Microbiol.">
        <title>Expression, mutagenesis and kinetic analysis of recombinant K1E endosialidase to define the site of proteolytic processing and requirements for catalysis.</title>
        <authorList>
            <person name="Leggate D.R."/>
            <person name="Bryant J.M."/>
            <person name="Redpath M.B."/>
            <person name="Head D."/>
            <person name="Taylor P.W."/>
            <person name="Luzio J.P."/>
        </authorList>
    </citation>
    <scope>PROTEIN SEQUENCE OF 707-718</scope>
    <scope>PROTEOLYTIC CLEAVAGE (MATURE TAIL SPIKE PROTEIN)</scope>
    <scope>MUTAGENESIS OF ASP-138 AND 706-SER-ASP-707</scope>
    <scope>CATALYTIC ACTIVITY</scope>
    <scope>BIOPHYSICOCHEMICAL PROPERTIES</scope>
    <scope>FUNCTION (INTRAMOLECULAR CHAPERONE)</scope>
</reference>
<reference key="6">
    <citation type="journal article" date="2007" name="J. Mol. Biol.">
        <title>The structures of bacteriophages K1E and K1-5 explain processive degradation of polysaccharide capsules and evolution of new host specificities.</title>
        <authorList>
            <person name="Leiman P.G."/>
            <person name="Battisti A.J."/>
            <person name="Bowman V.D."/>
            <person name="Stummeyer K."/>
            <person name="Muehlenhoff M."/>
            <person name="Gerardy-Schahn R."/>
            <person name="Scholl D."/>
            <person name="Molineux I.J."/>
        </authorList>
    </citation>
    <scope>STRUCTURE BY ELECTRON MICROSCOPY (9.0 ANGSTROMS)</scope>
    <scope>SUBCELLULAR LOCATION (MATURE TAIL SPIKE PROTEIN)</scope>
    <scope>INTERACTION WITH ADAPTER PROTEIN GP37 (MATURE TAIL SPIKE PROTEIN)</scope>
    <scope>SUBUNIT (MATURE TAIL SPIKE PROTEIN)</scope>
    <scope>INTERACTION WITH GP46 (MATURE TAIL SPIKE PROTEIN)</scope>
    <scope>FUNCTION (MATURE TAIL SPIKE PROTEIN)</scope>
</reference>
<sequence length="811" mass="90524">MIQRLGSSLVKFKSKIAGAIWRNLDDKLTEVVSLKDFGAKGDGKTNDQDAVNAAMASGKRIDGAGATYKVSSLPDMERFYNTRFVWERLAGQPLYYVSKGFINGELYKITDNPYYNAWPQDKAFVYENVIYAPYMGSDRHGVSRLHVSWVKSGDDGQTWSTPEWLTDMHPDYPTVNYHCMSMGVCRNRLFAMIETRTLAKNELTNCALWDRPMSRSLHLTGGITKAANQRYATIHVPDHGLFVGDFVNFSNSAVTGVSGDMKVATVIDKDNFTVLTPNQQTSDLNNAGKNWHMGTSFHKSPWRKTDLGLIPRVTEVHSFATIDNNGFVMGYHQGDVAPREVGLFYFPDAFNSPSNYVRRQIPSEYEPDAAEPCIKYYDGVLYLITRGTRGDRLGSSLHRSRDIGQTWESLRFPHNVHHTTLPFAKVGDDLIMFGSERAENEWEAGAPDDRYKASYPRTFYARLNVNNWNADDIEWVNITDQIYQGDIVNSSVGVGSVVVKDSFIYYIFGGENHFNPMTYGDNKDKDPFKGHGHPTDIYCYKMQIANDNRVSRKFTYGATPGQAIPTFMGTDGIRNIPAPLYFSDNIVTEDTKVGHLTLKASTSANIRSEMQMEGEYGFIGKSVPKDKPTGQRLIICGGEGTSSSSGAQITLHGSNSSNAKRITYNGNEHLFQGAPIMPAVDNQFAAGGPSNRFTTIYLGSDPVTTSDADHKYGISSINTKVLKAWSRVGFKQYGLNSEAERNLDSIHFGVLAQDIVAAFEAEGLDAIKYGIVSFEEGRYGVRYSEVLILEAAYTRHRLDKLEEMYATNKIS</sequence>
<protein>
    <recommendedName>
        <fullName evidence="8">Tail spike protein</fullName>
        <shortName>TSP</shortName>
    </recommendedName>
    <alternativeName>
        <fullName>Endo-N-acetylneuraminidase</fullName>
        <shortName>Endo-N</shortName>
    </alternativeName>
    <alternativeName>
        <fullName evidence="7">Endo-alpha-sialidase</fullName>
        <ecNumber evidence="3 5">3.2.1.129</ecNumber>
    </alternativeName>
    <alternativeName>
        <fullName>EndoNE</fullName>
    </alternativeName>
    <component>
        <recommendedName>
            <fullName evidence="6">Mature tail spike protein</fullName>
        </recommendedName>
    </component>
    <component>
        <recommendedName>
            <fullName evidence="6">Intramolecular chaperone</fullName>
        </recommendedName>
    </component>
</protein>
<evidence type="ECO:0000250" key="1">
    <source>
        <dbReference type="UniProtKB" id="Q04830"/>
    </source>
</evidence>
<evidence type="ECO:0000255" key="2">
    <source>
        <dbReference type="PROSITE-ProRule" id="PRU01025"/>
    </source>
</evidence>
<evidence type="ECO:0000269" key="3">
    <source>
    </source>
</evidence>
<evidence type="ECO:0000269" key="4">
    <source>
    </source>
</evidence>
<evidence type="ECO:0000269" key="5">
    <source>
    </source>
</evidence>
<evidence type="ECO:0000303" key="6">
    <source>
    </source>
</evidence>
<evidence type="ECO:0000303" key="7">
    <source>
    </source>
</evidence>
<evidence type="ECO:0000305" key="8"/>
<organismHost>
    <name type="scientific">Escherichia coli</name>
    <dbReference type="NCBI Taxonomy" id="562"/>
</organismHost>
<proteinExistence type="evidence at protein level"/>